<feature type="chain" id="PRO_0000387881" description="4-hydroxy-2-oxovalerate aldolase 2">
    <location>
        <begin position="1"/>
        <end position="346"/>
    </location>
</feature>
<feature type="domain" description="Pyruvate carboxyltransferase" evidence="1">
    <location>
        <begin position="8"/>
        <end position="260"/>
    </location>
</feature>
<feature type="active site" description="Proton acceptor" evidence="1">
    <location>
        <position position="20"/>
    </location>
</feature>
<feature type="binding site" evidence="1">
    <location>
        <begin position="16"/>
        <end position="17"/>
    </location>
    <ligand>
        <name>substrate</name>
    </ligand>
</feature>
<feature type="binding site" evidence="1">
    <location>
        <position position="17"/>
    </location>
    <ligand>
        <name>Mn(2+)</name>
        <dbReference type="ChEBI" id="CHEBI:29035"/>
    </ligand>
</feature>
<feature type="binding site" evidence="1">
    <location>
        <position position="170"/>
    </location>
    <ligand>
        <name>substrate</name>
    </ligand>
</feature>
<feature type="binding site" evidence="1">
    <location>
        <position position="199"/>
    </location>
    <ligand>
        <name>Mn(2+)</name>
        <dbReference type="ChEBI" id="CHEBI:29035"/>
    </ligand>
</feature>
<feature type="binding site" evidence="1">
    <location>
        <position position="199"/>
    </location>
    <ligand>
        <name>substrate</name>
    </ligand>
</feature>
<feature type="binding site" evidence="1">
    <location>
        <position position="201"/>
    </location>
    <ligand>
        <name>Mn(2+)</name>
        <dbReference type="ChEBI" id="CHEBI:29035"/>
    </ligand>
</feature>
<feature type="binding site" evidence="1">
    <location>
        <position position="290"/>
    </location>
    <ligand>
        <name>substrate</name>
    </ligand>
</feature>
<feature type="site" description="Transition state stabilizer" evidence="1">
    <location>
        <position position="16"/>
    </location>
</feature>
<proteinExistence type="inferred from homology"/>
<name>HOA2_METFU</name>
<reference key="1">
    <citation type="journal article" date="1997" name="J. Bacteriol.">
        <title>Functional analyses of a variety of chimeric dioxygenases constructed from two biphenyl dioxygenases that are similar structurally but different functionally.</title>
        <authorList>
            <person name="Kimura N."/>
            <person name="Nishi A."/>
            <person name="Goto M."/>
            <person name="Furukawa K."/>
        </authorList>
    </citation>
    <scope>NUCLEOTIDE SEQUENCE [GENOMIC DNA]</scope>
    <source>
        <strain>DSM 10086 / NBRC 110670 / KF707</strain>
    </source>
</reference>
<protein>
    <recommendedName>
        <fullName evidence="1">4-hydroxy-2-oxovalerate aldolase 2</fullName>
        <shortName evidence="1">HOA 2</shortName>
        <ecNumber evidence="1">4.1.3.39</ecNumber>
    </recommendedName>
    <alternativeName>
        <fullName evidence="1">4-hydroxy-2-keto-pentanoic acid aldolase 2</fullName>
    </alternativeName>
    <alternativeName>
        <fullName evidence="1">4-hydroxy-2-oxopentanoate aldolase 2</fullName>
    </alternativeName>
</protein>
<gene>
    <name type="primary">bphX3</name>
</gene>
<dbReference type="EC" id="4.1.3.39" evidence="1"/>
<dbReference type="EMBL" id="D85853">
    <property type="protein sequence ID" value="BAA12886.1"/>
    <property type="molecule type" value="Genomic_DNA"/>
</dbReference>
<dbReference type="RefSeq" id="WP_003450974.1">
    <property type="nucleotide sequence ID" value="NZ_AJMR01000119.1"/>
</dbReference>
<dbReference type="SMR" id="Q52040"/>
<dbReference type="STRING" id="1149133.ppKF707_3396"/>
<dbReference type="OrthoDB" id="9803573at2"/>
<dbReference type="GO" id="GO:0003852">
    <property type="term" value="F:2-isopropylmalate synthase activity"/>
    <property type="evidence" value="ECO:0007669"/>
    <property type="project" value="TreeGrafter"/>
</dbReference>
<dbReference type="GO" id="GO:0008701">
    <property type="term" value="F:4-hydroxy-2-oxovalerate aldolase activity"/>
    <property type="evidence" value="ECO:0007669"/>
    <property type="project" value="UniProtKB-UniRule"/>
</dbReference>
<dbReference type="GO" id="GO:0030145">
    <property type="term" value="F:manganese ion binding"/>
    <property type="evidence" value="ECO:0007669"/>
    <property type="project" value="UniProtKB-UniRule"/>
</dbReference>
<dbReference type="GO" id="GO:0009056">
    <property type="term" value="P:catabolic process"/>
    <property type="evidence" value="ECO:0007669"/>
    <property type="project" value="UniProtKB-KW"/>
</dbReference>
<dbReference type="GO" id="GO:0009098">
    <property type="term" value="P:L-leucine biosynthetic process"/>
    <property type="evidence" value="ECO:0007669"/>
    <property type="project" value="TreeGrafter"/>
</dbReference>
<dbReference type="CDD" id="cd07943">
    <property type="entry name" value="DRE_TIM_HOA"/>
    <property type="match status" value="1"/>
</dbReference>
<dbReference type="Gene3D" id="1.10.8.60">
    <property type="match status" value="1"/>
</dbReference>
<dbReference type="Gene3D" id="3.20.20.70">
    <property type="entry name" value="Aldolase class I"/>
    <property type="match status" value="1"/>
</dbReference>
<dbReference type="HAMAP" id="MF_01656">
    <property type="entry name" value="HOA"/>
    <property type="match status" value="1"/>
</dbReference>
<dbReference type="InterPro" id="IPR050073">
    <property type="entry name" value="2-IPM_HCS-like"/>
</dbReference>
<dbReference type="InterPro" id="IPR017629">
    <property type="entry name" value="4OH_2_O-val_aldolase"/>
</dbReference>
<dbReference type="InterPro" id="IPR013785">
    <property type="entry name" value="Aldolase_TIM"/>
</dbReference>
<dbReference type="InterPro" id="IPR012425">
    <property type="entry name" value="DmpG_comm"/>
</dbReference>
<dbReference type="InterPro" id="IPR035685">
    <property type="entry name" value="DRE_TIM_HOA"/>
</dbReference>
<dbReference type="InterPro" id="IPR000891">
    <property type="entry name" value="PYR_CT"/>
</dbReference>
<dbReference type="NCBIfam" id="TIGR03217">
    <property type="entry name" value="4OH_2_O_val_ald"/>
    <property type="match status" value="1"/>
</dbReference>
<dbReference type="NCBIfam" id="NF006049">
    <property type="entry name" value="PRK08195.1"/>
    <property type="match status" value="1"/>
</dbReference>
<dbReference type="PANTHER" id="PTHR10277:SF9">
    <property type="entry name" value="2-ISOPROPYLMALATE SYNTHASE 1, CHLOROPLASTIC-RELATED"/>
    <property type="match status" value="1"/>
</dbReference>
<dbReference type="PANTHER" id="PTHR10277">
    <property type="entry name" value="HOMOCITRATE SYNTHASE-RELATED"/>
    <property type="match status" value="1"/>
</dbReference>
<dbReference type="Pfam" id="PF07836">
    <property type="entry name" value="DmpG_comm"/>
    <property type="match status" value="1"/>
</dbReference>
<dbReference type="Pfam" id="PF00682">
    <property type="entry name" value="HMGL-like"/>
    <property type="match status" value="1"/>
</dbReference>
<dbReference type="SUPFAM" id="SSF51569">
    <property type="entry name" value="Aldolase"/>
    <property type="match status" value="1"/>
</dbReference>
<dbReference type="SUPFAM" id="SSF89000">
    <property type="entry name" value="post-HMGL domain-like"/>
    <property type="match status" value="1"/>
</dbReference>
<dbReference type="PROSITE" id="PS50991">
    <property type="entry name" value="PYR_CT"/>
    <property type="match status" value="1"/>
</dbReference>
<sequence>MKLEGKKVTVHDMTLRDGMHPKRHQMTLEQMKSIACGLDAAGIPLIEVTHGDGLGGSSVNYGFPAHSDEEYLGAVIPLMKQAKVSALLLPGIGTVEHLKMAKDLGVNTIRVATHCTEADVSEQHITQSRKLGLDTVGFLMMAHMASPEKLVSQALLMQGYGANCIYVTDSAGYMLPDDVKARLSAVRAALKPETELGFHGHHNLAMGVANSIAAIEAGATRIDAAAAGLGAGAGNTPMEVFIAVCARMGIETGVDVFKIQDVAEDLVVPIMDHVIRIDRDSLTLGYAGVYSSFLLFAKRASAKYGVPARDILVELGRRGMVGGQEDMIEDTAMTMARERGLTLTAA</sequence>
<keyword id="KW-0058">Aromatic hydrocarbons catabolism</keyword>
<keyword id="KW-0456">Lyase</keyword>
<keyword id="KW-0464">Manganese</keyword>
<keyword id="KW-0479">Metal-binding</keyword>
<accession>Q52040</accession>
<comment type="catalytic activity">
    <reaction evidence="1">
        <text>(S)-4-hydroxy-2-oxopentanoate = acetaldehyde + pyruvate</text>
        <dbReference type="Rhea" id="RHEA:22624"/>
        <dbReference type="ChEBI" id="CHEBI:15343"/>
        <dbReference type="ChEBI" id="CHEBI:15361"/>
        <dbReference type="ChEBI" id="CHEBI:73143"/>
        <dbReference type="EC" id="4.1.3.39"/>
    </reaction>
</comment>
<comment type="similarity">
    <text evidence="1">Belongs to the 4-hydroxy-2-oxovalerate aldolase family.</text>
</comment>
<evidence type="ECO:0000255" key="1">
    <source>
        <dbReference type="HAMAP-Rule" id="MF_01656"/>
    </source>
</evidence>
<organism>
    <name type="scientific">Metapseudomonas furukawaii</name>
    <name type="common">Pseudomonas furukawaii</name>
    <dbReference type="NCBI Taxonomy" id="1149133"/>
    <lineage>
        <taxon>Bacteria</taxon>
        <taxon>Pseudomonadati</taxon>
        <taxon>Pseudomonadota</taxon>
        <taxon>Gammaproteobacteria</taxon>
        <taxon>Pseudomonadales</taxon>
        <taxon>Pseudomonadaceae</taxon>
        <taxon>Metapseudomonas</taxon>
    </lineage>
</organism>